<sequence>MIQDSMQFAAVESGLRFYQAYDQSLSLWPIESEAFYVSTRFGKTHIIASGPKDAPSLILLHGGLFSSAMWYPNIAAWSSQFRTYAVDIIGDKNKSIPSAAMETRADFAEWMKDVFDSLGLETAHLAGLSLGGSHIVNFLLRAPERVERAVVISPAEAFISFHPDVYKYAAELTGARGAESYIKWITGDSYDLHPLLQRQIVAGVEWQDEQRSLKPTENGFPYVFTDQELKSIQVPVLLMFGEHEAMYHQQMAFERASVLVPGIQAEIVKNAGHLLSLEQPEYVNQRVLSFLCGGIK</sequence>
<gene>
    <name type="primary">ybfK</name>
    <name type="ordered locus">BSU02260</name>
</gene>
<name>YBFK_BACSU</name>
<proteinExistence type="evidence at protein level"/>
<protein>
    <recommendedName>
        <fullName>Carboxylesterase YbfK</fullName>
        <ecNumber>3.1.1.1</ecNumber>
    </recommendedName>
</protein>
<dbReference type="EC" id="3.1.1.1"/>
<dbReference type="EMBL" id="AB006424">
    <property type="protein sequence ID" value="BAA33123.1"/>
    <property type="molecule type" value="Genomic_DNA"/>
</dbReference>
<dbReference type="EMBL" id="AL009126">
    <property type="protein sequence ID" value="CAB12020.1"/>
    <property type="molecule type" value="Genomic_DNA"/>
</dbReference>
<dbReference type="PIR" id="F69749">
    <property type="entry name" value="F69749"/>
</dbReference>
<dbReference type="PDB" id="4CCY">
    <property type="method" value="X-ray"/>
    <property type="resolution" value="2.04 A"/>
    <property type="chains" value="A/B=1-296"/>
</dbReference>
<dbReference type="PDBsum" id="4CCY"/>
<dbReference type="SMR" id="O31452"/>
<dbReference type="FunCoup" id="O31452">
    <property type="interactions" value="114"/>
</dbReference>
<dbReference type="STRING" id="224308.BSU02260"/>
<dbReference type="ESTHER" id="bacsu-ybfk">
    <property type="family name" value="6_AlphaBeta_hydrolase"/>
</dbReference>
<dbReference type="PaxDb" id="224308-BSU02260"/>
<dbReference type="EnsemblBacteria" id="CAB12020">
    <property type="protein sequence ID" value="CAB12020"/>
    <property type="gene ID" value="BSU_02260"/>
</dbReference>
<dbReference type="GeneID" id="938434"/>
<dbReference type="KEGG" id="bsu:BSU02260"/>
<dbReference type="PATRIC" id="fig|224308.179.peg.232"/>
<dbReference type="eggNOG" id="COG0596">
    <property type="taxonomic scope" value="Bacteria"/>
</dbReference>
<dbReference type="InParanoid" id="O31452"/>
<dbReference type="OrthoDB" id="5513277at2"/>
<dbReference type="PhylomeDB" id="O31452"/>
<dbReference type="BioCyc" id="BSUB:BSU02260-MONOMER"/>
<dbReference type="EvolutionaryTrace" id="O31452"/>
<dbReference type="Proteomes" id="UP000001570">
    <property type="component" value="Chromosome"/>
</dbReference>
<dbReference type="GO" id="GO:0005737">
    <property type="term" value="C:cytoplasm"/>
    <property type="evidence" value="ECO:0007669"/>
    <property type="project" value="UniProtKB-SubCell"/>
</dbReference>
<dbReference type="GO" id="GO:0106435">
    <property type="term" value="F:carboxylesterase activity"/>
    <property type="evidence" value="ECO:0007669"/>
    <property type="project" value="UniProtKB-EC"/>
</dbReference>
<dbReference type="Gene3D" id="3.40.50.1820">
    <property type="entry name" value="alpha/beta hydrolase"/>
    <property type="match status" value="1"/>
</dbReference>
<dbReference type="InterPro" id="IPR000073">
    <property type="entry name" value="AB_hydrolase_1"/>
</dbReference>
<dbReference type="InterPro" id="IPR029058">
    <property type="entry name" value="AB_hydrolase_fold"/>
</dbReference>
<dbReference type="InterPro" id="IPR050266">
    <property type="entry name" value="AB_hydrolase_sf"/>
</dbReference>
<dbReference type="PANTHER" id="PTHR43798:SF33">
    <property type="entry name" value="HYDROLASE, PUTATIVE (AFU_ORTHOLOGUE AFUA_2G14860)-RELATED"/>
    <property type="match status" value="1"/>
</dbReference>
<dbReference type="PANTHER" id="PTHR43798">
    <property type="entry name" value="MONOACYLGLYCEROL LIPASE"/>
    <property type="match status" value="1"/>
</dbReference>
<dbReference type="Pfam" id="PF12697">
    <property type="entry name" value="Abhydrolase_6"/>
    <property type="match status" value="1"/>
</dbReference>
<dbReference type="SUPFAM" id="SSF53474">
    <property type="entry name" value="alpha/beta-Hydrolases"/>
    <property type="match status" value="1"/>
</dbReference>
<accession>O31452</accession>
<accession>Q7DL48</accession>
<comment type="function">
    <text evidence="2">Shows carboxylesterase activity in vitro.</text>
</comment>
<comment type="catalytic activity">
    <reaction evidence="2">
        <text>a carboxylic ester + H2O = an alcohol + a carboxylate + H(+)</text>
        <dbReference type="Rhea" id="RHEA:21164"/>
        <dbReference type="ChEBI" id="CHEBI:15377"/>
        <dbReference type="ChEBI" id="CHEBI:15378"/>
        <dbReference type="ChEBI" id="CHEBI:29067"/>
        <dbReference type="ChEBI" id="CHEBI:30879"/>
        <dbReference type="ChEBI" id="CHEBI:33308"/>
        <dbReference type="EC" id="3.1.1.1"/>
    </reaction>
</comment>
<comment type="subcellular location">
    <subcellularLocation>
        <location evidence="3">Cytoplasm</location>
    </subcellularLocation>
</comment>
<comment type="similarity">
    <text evidence="3">Belongs to the AB hydrolase superfamily.</text>
</comment>
<organism>
    <name type="scientific">Bacillus subtilis (strain 168)</name>
    <dbReference type="NCBI Taxonomy" id="224308"/>
    <lineage>
        <taxon>Bacteria</taxon>
        <taxon>Bacillati</taxon>
        <taxon>Bacillota</taxon>
        <taxon>Bacilli</taxon>
        <taxon>Bacillales</taxon>
        <taxon>Bacillaceae</taxon>
        <taxon>Bacillus</taxon>
    </lineage>
</organism>
<evidence type="ECO:0000250" key="1"/>
<evidence type="ECO:0000269" key="2">
    <source>
    </source>
</evidence>
<evidence type="ECO:0000305" key="3"/>
<evidence type="ECO:0007829" key="4">
    <source>
        <dbReference type="PDB" id="4CCY"/>
    </source>
</evidence>
<reference key="1">
    <citation type="submission" date="1997-07" db="EMBL/GenBank/DDBJ databases">
        <title>Sequence analysis of the 70kb region between 17 and 23 degree of the Bacillus subtilis chromosome.</title>
        <authorList>
            <person name="Haga K."/>
            <person name="Liu H."/>
            <person name="Yasumoto K."/>
            <person name="Takahashi H."/>
            <person name="Yoshikawa H."/>
        </authorList>
    </citation>
    <scope>NUCLEOTIDE SEQUENCE [GENOMIC DNA]</scope>
    <source>
        <strain>168</strain>
    </source>
</reference>
<reference key="2">
    <citation type="journal article" date="1997" name="Nature">
        <title>The complete genome sequence of the Gram-positive bacterium Bacillus subtilis.</title>
        <authorList>
            <person name="Kunst F."/>
            <person name="Ogasawara N."/>
            <person name="Moszer I."/>
            <person name="Albertini A.M."/>
            <person name="Alloni G."/>
            <person name="Azevedo V."/>
            <person name="Bertero M.G."/>
            <person name="Bessieres P."/>
            <person name="Bolotin A."/>
            <person name="Borchert S."/>
            <person name="Borriss R."/>
            <person name="Boursier L."/>
            <person name="Brans A."/>
            <person name="Braun M."/>
            <person name="Brignell S.C."/>
            <person name="Bron S."/>
            <person name="Brouillet S."/>
            <person name="Bruschi C.V."/>
            <person name="Caldwell B."/>
            <person name="Capuano V."/>
            <person name="Carter N.M."/>
            <person name="Choi S.-K."/>
            <person name="Codani J.-J."/>
            <person name="Connerton I.F."/>
            <person name="Cummings N.J."/>
            <person name="Daniel R.A."/>
            <person name="Denizot F."/>
            <person name="Devine K.M."/>
            <person name="Duesterhoeft A."/>
            <person name="Ehrlich S.D."/>
            <person name="Emmerson P.T."/>
            <person name="Entian K.-D."/>
            <person name="Errington J."/>
            <person name="Fabret C."/>
            <person name="Ferrari E."/>
            <person name="Foulger D."/>
            <person name="Fritz C."/>
            <person name="Fujita M."/>
            <person name="Fujita Y."/>
            <person name="Fuma S."/>
            <person name="Galizzi A."/>
            <person name="Galleron N."/>
            <person name="Ghim S.-Y."/>
            <person name="Glaser P."/>
            <person name="Goffeau A."/>
            <person name="Golightly E.J."/>
            <person name="Grandi G."/>
            <person name="Guiseppi G."/>
            <person name="Guy B.J."/>
            <person name="Haga K."/>
            <person name="Haiech J."/>
            <person name="Harwood C.R."/>
            <person name="Henaut A."/>
            <person name="Hilbert H."/>
            <person name="Holsappel S."/>
            <person name="Hosono S."/>
            <person name="Hullo M.-F."/>
            <person name="Itaya M."/>
            <person name="Jones L.-M."/>
            <person name="Joris B."/>
            <person name="Karamata D."/>
            <person name="Kasahara Y."/>
            <person name="Klaerr-Blanchard M."/>
            <person name="Klein C."/>
            <person name="Kobayashi Y."/>
            <person name="Koetter P."/>
            <person name="Koningstein G."/>
            <person name="Krogh S."/>
            <person name="Kumano M."/>
            <person name="Kurita K."/>
            <person name="Lapidus A."/>
            <person name="Lardinois S."/>
            <person name="Lauber J."/>
            <person name="Lazarevic V."/>
            <person name="Lee S.-M."/>
            <person name="Levine A."/>
            <person name="Liu H."/>
            <person name="Masuda S."/>
            <person name="Mauel C."/>
            <person name="Medigue C."/>
            <person name="Medina N."/>
            <person name="Mellado R.P."/>
            <person name="Mizuno M."/>
            <person name="Moestl D."/>
            <person name="Nakai S."/>
            <person name="Noback M."/>
            <person name="Noone D."/>
            <person name="O'Reilly M."/>
            <person name="Ogawa K."/>
            <person name="Ogiwara A."/>
            <person name="Oudega B."/>
            <person name="Park S.-H."/>
            <person name="Parro V."/>
            <person name="Pohl T.M."/>
            <person name="Portetelle D."/>
            <person name="Porwollik S."/>
            <person name="Prescott A.M."/>
            <person name="Presecan E."/>
            <person name="Pujic P."/>
            <person name="Purnelle B."/>
            <person name="Rapoport G."/>
            <person name="Rey M."/>
            <person name="Reynolds S."/>
            <person name="Rieger M."/>
            <person name="Rivolta C."/>
            <person name="Rocha E."/>
            <person name="Roche B."/>
            <person name="Rose M."/>
            <person name="Sadaie Y."/>
            <person name="Sato T."/>
            <person name="Scanlan E."/>
            <person name="Schleich S."/>
            <person name="Schroeter R."/>
            <person name="Scoffone F."/>
            <person name="Sekiguchi J."/>
            <person name="Sekowska A."/>
            <person name="Seror S.J."/>
            <person name="Serror P."/>
            <person name="Shin B.-S."/>
            <person name="Soldo B."/>
            <person name="Sorokin A."/>
            <person name="Tacconi E."/>
            <person name="Takagi T."/>
            <person name="Takahashi H."/>
            <person name="Takemaru K."/>
            <person name="Takeuchi M."/>
            <person name="Tamakoshi A."/>
            <person name="Tanaka T."/>
            <person name="Terpstra P."/>
            <person name="Tognoni A."/>
            <person name="Tosato V."/>
            <person name="Uchiyama S."/>
            <person name="Vandenbol M."/>
            <person name="Vannier F."/>
            <person name="Vassarotti A."/>
            <person name="Viari A."/>
            <person name="Wambutt R."/>
            <person name="Wedler E."/>
            <person name="Wedler H."/>
            <person name="Weitzenegger T."/>
            <person name="Winters P."/>
            <person name="Wipat A."/>
            <person name="Yamamoto H."/>
            <person name="Yamane K."/>
            <person name="Yasumoto K."/>
            <person name="Yata K."/>
            <person name="Yoshida K."/>
            <person name="Yoshikawa H.-F."/>
            <person name="Zumstein E."/>
            <person name="Yoshikawa H."/>
            <person name="Danchin A."/>
        </authorList>
    </citation>
    <scope>NUCLEOTIDE SEQUENCE [LARGE SCALE GENOMIC DNA]</scope>
    <source>
        <strain>168</strain>
    </source>
</reference>
<reference key="3">
    <citation type="journal article" date="2001" name="Eur. J. Biochem.">
        <title>Paralogous gene analysis reveals a highly enantioselective 1,2-O-isopropylideneglycerol caprylate esterase of Bacillus subtilis.</title>
        <authorList>
            <person name="Droege M.J."/>
            <person name="Bos R."/>
            <person name="Quax W.J."/>
        </authorList>
    </citation>
    <scope>FUNCTION</scope>
    <scope>CATALYTIC ACTIVITY</scope>
</reference>
<feature type="chain" id="PRO_0000360753" description="Carboxylesterase YbfK">
    <location>
        <begin position="1"/>
        <end position="296"/>
    </location>
</feature>
<feature type="active site" description="Charge relay system" evidence="1">
    <location>
        <position position="129"/>
    </location>
</feature>
<feature type="active site" description="Charge relay system" evidence="1">
    <location>
        <position position="244"/>
    </location>
</feature>
<feature type="active site" description="Charge relay system" evidence="1">
    <location>
        <position position="273"/>
    </location>
</feature>
<feature type="helix" evidence="4">
    <location>
        <begin position="12"/>
        <end position="24"/>
    </location>
</feature>
<feature type="helix" evidence="4">
    <location>
        <begin position="25"/>
        <end position="27"/>
    </location>
</feature>
<feature type="strand" evidence="4">
    <location>
        <begin position="33"/>
        <end position="37"/>
    </location>
</feature>
<feature type="strand" evidence="4">
    <location>
        <begin position="42"/>
        <end position="50"/>
    </location>
</feature>
<feature type="strand" evidence="4">
    <location>
        <begin position="56"/>
        <end position="60"/>
    </location>
</feature>
<feature type="turn" evidence="4">
    <location>
        <begin position="63"/>
        <end position="65"/>
    </location>
</feature>
<feature type="helix" evidence="4">
    <location>
        <begin position="67"/>
        <end position="70"/>
    </location>
</feature>
<feature type="helix" evidence="4">
    <location>
        <begin position="71"/>
        <end position="80"/>
    </location>
</feature>
<feature type="strand" evidence="4">
    <location>
        <begin position="81"/>
        <end position="86"/>
    </location>
</feature>
<feature type="strand" evidence="4">
    <location>
        <begin position="91"/>
        <end position="94"/>
    </location>
</feature>
<feature type="strand" evidence="4">
    <location>
        <begin position="96"/>
        <end position="99"/>
    </location>
</feature>
<feature type="helix" evidence="4">
    <location>
        <begin position="104"/>
        <end position="118"/>
    </location>
</feature>
<feature type="strand" evidence="4">
    <location>
        <begin position="123"/>
        <end position="128"/>
    </location>
</feature>
<feature type="helix" evidence="4">
    <location>
        <begin position="130"/>
        <end position="141"/>
    </location>
</feature>
<feature type="helix" evidence="4">
    <location>
        <begin position="143"/>
        <end position="145"/>
    </location>
</feature>
<feature type="strand" evidence="4">
    <location>
        <begin position="146"/>
        <end position="153"/>
    </location>
</feature>
<feature type="strand" evidence="4">
    <location>
        <begin position="155"/>
        <end position="159"/>
    </location>
</feature>
<feature type="helix" evidence="4">
    <location>
        <begin position="164"/>
        <end position="170"/>
    </location>
</feature>
<feature type="turn" evidence="4">
    <location>
        <begin position="171"/>
        <end position="173"/>
    </location>
</feature>
<feature type="helix" evidence="4">
    <location>
        <begin position="175"/>
        <end position="186"/>
    </location>
</feature>
<feature type="helix" evidence="4">
    <location>
        <begin position="194"/>
        <end position="205"/>
    </location>
</feature>
<feature type="helix" evidence="4">
    <location>
        <begin position="209"/>
        <end position="211"/>
    </location>
</feature>
<feature type="strand" evidence="4">
    <location>
        <begin position="219"/>
        <end position="221"/>
    </location>
</feature>
<feature type="helix" evidence="4">
    <location>
        <begin position="226"/>
        <end position="230"/>
    </location>
</feature>
<feature type="strand" evidence="4">
    <location>
        <begin position="236"/>
        <end position="241"/>
    </location>
</feature>
<feature type="strand" evidence="4">
    <location>
        <begin position="245"/>
        <end position="247"/>
    </location>
</feature>
<feature type="helix" evidence="4">
    <location>
        <begin position="249"/>
        <end position="259"/>
    </location>
</feature>
<feature type="strand" evidence="4">
    <location>
        <begin position="264"/>
        <end position="268"/>
    </location>
</feature>
<feature type="helix" evidence="4">
    <location>
        <begin position="275"/>
        <end position="278"/>
    </location>
</feature>
<feature type="helix" evidence="4">
    <location>
        <begin position="280"/>
        <end position="291"/>
    </location>
</feature>
<keyword id="KW-0002">3D-structure</keyword>
<keyword id="KW-0963">Cytoplasm</keyword>
<keyword id="KW-0378">Hydrolase</keyword>
<keyword id="KW-1185">Reference proteome</keyword>